<sequence length="185" mass="20026">MLRAATNLYSPPNTGKMSPKTIGSDVGIEVIPVMTGTFLSGAMMSLFLLTIPVILETTTVPSQLLNQWHRIFYRGHIQGPLISIATGLLYSYAAYQRSQRGAAWKPFAVSAAVTVAMIPFTWVFMANVNNSLFRAVAVTEKGGEGNWNEAQGLVRSWGAWNAVRALFPLSGAVLGLLSTCKIVSF</sequence>
<reference key="1">
    <citation type="journal article" date="2012" name="PLoS Genet.">
        <title>The genomes of the fungal plant pathogens Cladosporium fulvum and Dothistroma septosporum reveal adaptation to different hosts and lifestyles but also signatures of common ancestry.</title>
        <authorList>
            <person name="de Wit P.J.G.M."/>
            <person name="van der Burgt A."/>
            <person name="Oekmen B."/>
            <person name="Stergiopoulos I."/>
            <person name="Abd-Elsalam K.A."/>
            <person name="Aerts A.L."/>
            <person name="Bahkali A.H."/>
            <person name="Beenen H.G."/>
            <person name="Chettri P."/>
            <person name="Cox M.P."/>
            <person name="Datema E."/>
            <person name="de Vries R.P."/>
            <person name="Dhillon B."/>
            <person name="Ganley A.R."/>
            <person name="Griffiths S.A."/>
            <person name="Guo Y."/>
            <person name="Hamelin R.C."/>
            <person name="Henrissat B."/>
            <person name="Kabir M.S."/>
            <person name="Jashni M.K."/>
            <person name="Kema G."/>
            <person name="Klaubauf S."/>
            <person name="Lapidus A."/>
            <person name="Levasseur A."/>
            <person name="Lindquist E."/>
            <person name="Mehrabi R."/>
            <person name="Ohm R.A."/>
            <person name="Owen T.J."/>
            <person name="Salamov A."/>
            <person name="Schwelm A."/>
            <person name="Schijlen E."/>
            <person name="Sun H."/>
            <person name="van den Burg H.A."/>
            <person name="van Ham R.C.H.J."/>
            <person name="Zhang S."/>
            <person name="Goodwin S.B."/>
            <person name="Grigoriev I.V."/>
            <person name="Collemare J."/>
            <person name="Bradshaw R.E."/>
        </authorList>
    </citation>
    <scope>NUCLEOTIDE SEQUENCE [LARGE SCALE GENOMIC DNA]</scope>
    <source>
        <strain>NZE10 / CBS 128990</strain>
    </source>
</reference>
<reference key="2">
    <citation type="journal article" date="2012" name="PLoS Pathog.">
        <title>Diverse lifestyles and strategies of plant pathogenesis encoded in the genomes of eighteen Dothideomycetes fungi.</title>
        <authorList>
            <person name="Ohm R.A."/>
            <person name="Feau N."/>
            <person name="Henrissat B."/>
            <person name="Schoch C.L."/>
            <person name="Horwitz B.A."/>
            <person name="Barry K.W."/>
            <person name="Condon B.J."/>
            <person name="Copeland A.C."/>
            <person name="Dhillon B."/>
            <person name="Glaser F."/>
            <person name="Hesse C.N."/>
            <person name="Kosti I."/>
            <person name="LaButti K."/>
            <person name="Lindquist E.A."/>
            <person name="Lucas S."/>
            <person name="Salamov A.A."/>
            <person name="Bradshaw R.E."/>
            <person name="Ciuffetti L."/>
            <person name="Hamelin R.C."/>
            <person name="Kema G.H.J."/>
            <person name="Lawrence C."/>
            <person name="Scott J.A."/>
            <person name="Spatafora J.W."/>
            <person name="Turgeon B.G."/>
            <person name="de Wit P.J.G.M."/>
            <person name="Zhong S."/>
            <person name="Goodwin S.B."/>
            <person name="Grigoriev I.V."/>
        </authorList>
    </citation>
    <scope>NUCLEOTIDE SEQUENCE [LARGE SCALE GENOMIC DNA]</scope>
    <source>
        <strain>NZE10 / CBS 128990</strain>
    </source>
</reference>
<reference key="3">
    <citation type="journal article" date="2002" name="Appl. Environ. Microbiol.">
        <title>Dothistroma pini, a forest pathogen, contains homologs of aflatoxin biosynthetic pathway genes.</title>
        <authorList>
            <person name="Bradshaw R.E."/>
            <person name="Bhatnagar D."/>
            <person name="Ganley R.J."/>
            <person name="Gillman C.J."/>
            <person name="Monahan B.J."/>
            <person name="Seconi J.M."/>
        </authorList>
    </citation>
    <scope>FUNCTION</scope>
</reference>
<reference key="4">
    <citation type="journal article" date="2006" name="Mycopathologia">
        <title>A polyketide synthase gene required for biosynthesis of the aflatoxin-like toxin, dothistromin.</title>
        <authorList>
            <person name="Bradshaw R.E."/>
            <person name="Jin H."/>
            <person name="Morgan B.S."/>
            <person name="Schwelm A."/>
            <person name="Teddy O.R."/>
            <person name="Young C.A."/>
            <person name="Zhang S."/>
        </authorList>
    </citation>
    <scope>FUNCTION</scope>
</reference>
<reference key="5">
    <citation type="journal article" date="2007" name="Fungal Genet. Biol.">
        <title>A fragmented aflatoxin-like gene cluster in the forest pathogen Dothistroma septosporum.</title>
        <authorList>
            <person name="Zhang S."/>
            <person name="Schwelm A."/>
            <person name="Jin H."/>
            <person name="Collins L.J."/>
            <person name="Bradshaw R.E."/>
        </authorList>
    </citation>
    <scope>FUNCTION</scope>
</reference>
<reference key="6">
    <citation type="journal article" date="2010" name="Toxins">
        <title>Genetics of dothistromin biosynthesis of Dothistroma septosporum: an update.</title>
        <authorList>
            <person name="Schwelm A."/>
            <person name="Bradshaw R.E."/>
        </authorList>
    </citation>
    <scope>REVIEW ON FUNCTION</scope>
    <scope>PATHWAY</scope>
</reference>
<reference key="7">
    <citation type="journal article" date="2013" name="Fungal Genet. Biol.">
        <title>Dothistromin genes at multiple separate loci are regulated by AflR.</title>
        <authorList>
            <person name="Chettri P."/>
            <person name="Ehrlich K.C."/>
            <person name="Cary J.W."/>
            <person name="Collemare J."/>
            <person name="Cox M.P."/>
            <person name="Griffiths S.A."/>
            <person name="Olson M.A."/>
            <person name="de Wit P.J."/>
            <person name="Bradshaw R.E."/>
        </authorList>
    </citation>
    <scope>FUNCTION</scope>
    <scope>INDUCTION</scope>
    <scope>PATHWAY</scope>
</reference>
<reference key="8">
    <citation type="journal article" date="2013" name="New Phytol.">
        <title>Fragmentation of an aflatoxin-like gene cluster in a forest pathogen.</title>
        <authorList>
            <person name="Bradshaw R.E."/>
            <person name="Slot J.C."/>
            <person name="Moore G.G."/>
            <person name="Chettri P."/>
            <person name="de Wit P.J."/>
            <person name="Ehrlich K.C."/>
            <person name="Ganley A.R."/>
            <person name="Olson M.A."/>
            <person name="Rokas A."/>
            <person name="Carbone I."/>
            <person name="Cox M.P."/>
        </authorList>
    </citation>
    <scope>FUNCTION</scope>
</reference>
<gene>
    <name evidence="7" type="primary">hypC</name>
    <name type="ORF">DOTSEDRAFT_75655</name>
</gene>
<evidence type="ECO:0000250" key="1">
    <source>
        <dbReference type="UniProtKB" id="Q12437"/>
    </source>
</evidence>
<evidence type="ECO:0000255" key="2"/>
<evidence type="ECO:0000255" key="3">
    <source>
        <dbReference type="PROSITE-ProRule" id="PRU00498"/>
    </source>
</evidence>
<evidence type="ECO:0000269" key="4">
    <source>
    </source>
</evidence>
<evidence type="ECO:0000269" key="5">
    <source>
    </source>
</evidence>
<evidence type="ECO:0000269" key="6">
    <source>
    </source>
</evidence>
<evidence type="ECO:0000303" key="7">
    <source>
    </source>
</evidence>
<evidence type="ECO:0000303" key="8">
    <source>
    </source>
</evidence>
<evidence type="ECO:0000305" key="9"/>
<evidence type="ECO:0000305" key="10">
    <source>
    </source>
</evidence>
<evidence type="ECO:0000305" key="11">
    <source>
    </source>
</evidence>
<evidence type="ECO:0000305" key="12">
    <source>
    </source>
</evidence>
<dbReference type="EC" id="1.-.-.-" evidence="9"/>
<dbReference type="EMBL" id="KB446546">
    <property type="protein sequence ID" value="EME39098.1"/>
    <property type="molecule type" value="Genomic_DNA"/>
</dbReference>
<dbReference type="SMR" id="M2WJF5"/>
<dbReference type="STRING" id="675120.M2WJF5"/>
<dbReference type="GlyCosmos" id="M2WJF5">
    <property type="glycosylation" value="1 site, No reported glycans"/>
</dbReference>
<dbReference type="EnsemblFungi" id="EME39098">
    <property type="protein sequence ID" value="EME39098"/>
    <property type="gene ID" value="DOTSEDRAFT_75655"/>
</dbReference>
<dbReference type="eggNOG" id="ENOG502SBMN">
    <property type="taxonomic scope" value="Eukaryota"/>
</dbReference>
<dbReference type="HOGENOM" id="CLU_105974_0_0_1"/>
<dbReference type="OMA" id="PFTWVFM"/>
<dbReference type="OrthoDB" id="5954308at2759"/>
<dbReference type="Proteomes" id="UP000016933">
    <property type="component" value="Unassembled WGS sequence"/>
</dbReference>
<dbReference type="GO" id="GO:0016020">
    <property type="term" value="C:membrane"/>
    <property type="evidence" value="ECO:0007669"/>
    <property type="project" value="UniProtKB-SubCell"/>
</dbReference>
<dbReference type="GO" id="GO:0004497">
    <property type="term" value="F:monooxygenase activity"/>
    <property type="evidence" value="ECO:0007669"/>
    <property type="project" value="UniProtKB-KW"/>
</dbReference>
<dbReference type="InterPro" id="IPR013901">
    <property type="entry name" value="Anthrone_oxy"/>
</dbReference>
<dbReference type="PANTHER" id="PTHR35042">
    <property type="entry name" value="ANTHRONE OXYGENASE ENCC"/>
    <property type="match status" value="1"/>
</dbReference>
<dbReference type="PANTHER" id="PTHR35042:SF3">
    <property type="entry name" value="ANTHRONE OXYGENASE-RELATED"/>
    <property type="match status" value="1"/>
</dbReference>
<dbReference type="Pfam" id="PF08592">
    <property type="entry name" value="Anthrone_oxy"/>
    <property type="match status" value="1"/>
</dbReference>
<feature type="chain" id="PRO_0000443477" description="Monooxygenase hypC">
    <location>
        <begin position="1"/>
        <end position="185"/>
    </location>
</feature>
<feature type="transmembrane region" description="Helical" evidence="2">
    <location>
        <begin position="35"/>
        <end position="55"/>
    </location>
</feature>
<feature type="transmembrane region" description="Helical" evidence="2">
    <location>
        <begin position="75"/>
        <end position="95"/>
    </location>
</feature>
<feature type="transmembrane region" description="Helical" evidence="2">
    <location>
        <begin position="106"/>
        <end position="126"/>
    </location>
</feature>
<feature type="transmembrane region" description="Helical" evidence="2">
    <location>
        <begin position="165"/>
        <end position="185"/>
    </location>
</feature>
<feature type="glycosylation site" description="N-linked (GlcNAc...) asparagine" evidence="3">
    <location>
        <position position="129"/>
    </location>
</feature>
<organism>
    <name type="scientific">Dothistroma septosporum (strain NZE10 / CBS 128990)</name>
    <name type="common">Red band needle blight fungus</name>
    <name type="synonym">Mycosphaerella pini</name>
    <dbReference type="NCBI Taxonomy" id="675120"/>
    <lineage>
        <taxon>Eukaryota</taxon>
        <taxon>Fungi</taxon>
        <taxon>Dikarya</taxon>
        <taxon>Ascomycota</taxon>
        <taxon>Pezizomycotina</taxon>
        <taxon>Dothideomycetes</taxon>
        <taxon>Dothideomycetidae</taxon>
        <taxon>Mycosphaerellales</taxon>
        <taxon>Mycosphaerellaceae</taxon>
        <taxon>Dothistroma</taxon>
    </lineage>
</organism>
<protein>
    <recommendedName>
        <fullName evidence="9">Monooxygenase hypC</fullName>
        <ecNumber evidence="9">1.-.-.-</ecNumber>
    </recommendedName>
    <alternativeName>
        <fullName evidence="7">Dothistromin biosynthesis protein hypC</fullName>
    </alternativeName>
</protein>
<accession>M2WJF5</accession>
<keyword id="KW-0325">Glycoprotein</keyword>
<keyword id="KW-0472">Membrane</keyword>
<keyword id="KW-0503">Monooxygenase</keyword>
<keyword id="KW-0560">Oxidoreductase</keyword>
<keyword id="KW-1185">Reference proteome</keyword>
<keyword id="KW-0812">Transmembrane</keyword>
<keyword id="KW-1133">Transmembrane helix</keyword>
<comment type="function">
    <text evidence="1 4 5 8 10 11 12">Monooxygenase; part of the fragmented gene cluster that mediates the biosynthesis of dothistromin (DOTH), a polyketide toxin very similar in structure to the aflatoxin precursor, versicolorin B (PubMed:12039746, PubMed:17683963, PubMed:22069571, PubMed:23207690, PubMed:23448391). The first step of the pathway is the conversion of acetate to norsolorinic acid (NOR) and requires the fatty acid synthase subunits hexA and hexB, as well as the polyketide synthase pksA (PubMed:16649078, PubMed:23207690). PksA combines a hexanoyl starter unit and 7 malonyl-CoA extender units to synthesize the precursor NOR (By similarity). The hexanoyl starter unit is provided to the acyl-carrier protein (ACP) domain by the fungal fatty acid synthase hexA/hexB (By similarity). The second step is the conversion of NOR to averantin (AVN) and requires the norsolorinic acid ketoreductase nor1, which catalyzes the dehydration of norsolorinic acid to form (1'S)-averantin (PubMed:23207690). The cytochrome P450 monooxygenase avnA then catalyzes the hydroxylation of AVN to 5'hydroxyaverantin (HAVN) (PubMed:23207690). The next step is performed by adhA that transforms HAVN to averufin (AVF) (PubMed:23207690). Averufin might then be converted to hydroxyversicolorone by cypX and avfA (PubMed:23207690). Hydroxyversicolorone is further converted versiconal hemiacetal acetate (VHA) by moxY (PubMed:23207690). VHA is then the substrate for the versiconal hemiacetal acetate esterase est1 to yield versiconal (VAL) (PubMed:23207690). Versicolorin B synthase vbsA then converts VAL to versicolorin B (VERB) by closing the bisfuran ring (PubMed:16649078, PubMed:23207690). Then, the activity of the versicolorin B desaturase verB leads to versicolorin A (VERA) (PubMed:23207690). DotB, a predicted chloroperoxidase, may perform epoxidation of the A-ring of VERA (PubMed:23207690). Alternatively, a cytochrome P450, such as cypX or avnA could catalyze this step (PubMed:23207690). It is also possible that another, uncharacterized, cytochrome P450 enzyme is responsible for this step (PubMed:23207690). Opening of the epoxide could potentially be achieved by the epoxide hydrolase epoA (PubMed:23207690). However, epoA seems not to be required for DOTH biosynthesis, but other epoxide hydrolases may have the ability to complement this hydrolysis (PubMed:23207690). Alternatively, opening of the epoxide ring could be achieved non-enzymatically (PubMed:23207690). The next step is the deoxygenation of ring A to yield the 5,8-dihydroxyanthraquinone which is most likely catalyzed by the NADPH dehydrogenase encoded by ver1 (PubMed:23207690). The last stages of DOTH biosynthesis are proposed to involve hydroxylation of the bisfuran (PubMed:23207690). OrdB and norB might have oxidative roles here (PubMed:23207690). An alternative possibility is that cytochrome P450 monoogenases such as avnA and cypX might perform these steps in addition to previously proposed steps (PubMed:23207690).</text>
</comment>
<comment type="pathway">
    <text evidence="8 11">Mycotoxin biosynthesis.</text>
</comment>
<comment type="subcellular location">
    <subcellularLocation>
        <location evidence="9">Membrane</location>
        <topology evidence="9">Multi-pass membrane protein</topology>
    </subcellularLocation>
</comment>
<comment type="induction">
    <text evidence="6">Expression is positively regulated by the dothistromin-specific transcription factor aflR (PubMed:23207690).</text>
</comment>
<comment type="similarity">
    <text evidence="9">Belongs to the anthrone oxygenase family.</text>
</comment>
<proteinExistence type="evidence at transcript level"/>
<name>HYPC_DOTSN</name>